<evidence type="ECO:0000255" key="1">
    <source>
        <dbReference type="HAMAP-Rule" id="MF_00148"/>
    </source>
</evidence>
<organism>
    <name type="scientific">Latilactobacillus sakei subsp. sakei (strain 23K)</name>
    <name type="common">Lactobacillus sakei subsp. sakei</name>
    <dbReference type="NCBI Taxonomy" id="314315"/>
    <lineage>
        <taxon>Bacteria</taxon>
        <taxon>Bacillati</taxon>
        <taxon>Bacillota</taxon>
        <taxon>Bacilli</taxon>
        <taxon>Lactobacillales</taxon>
        <taxon>Lactobacillaceae</taxon>
        <taxon>Latilactobacillus</taxon>
    </lineage>
</organism>
<accession>Q38VY5</accession>
<name>UNG_LATSS</name>
<sequence>MKTIIHNDWQTVLEPEFAKPYYGQLHQFLKQEYATTTVYPEMHHIFQAFEWTPFEQVKVVILGQDPYHGPHQAHGCSFSVLPGVKVPPSLKNIYKELQTDVGFNPVNHGYLKAWADQGVFLLNTVLTVRAGEANSHRQQGWEQLTDAAIAALSQRGHVVFILWGNSAKAKRALIDESQNAVLTAVHPSPLAAYHGFFGSKPFSQTNQQLKQWAMTPINWQLPQDVSEQK</sequence>
<keyword id="KW-0963">Cytoplasm</keyword>
<keyword id="KW-0227">DNA damage</keyword>
<keyword id="KW-0234">DNA repair</keyword>
<keyword id="KW-0378">Hydrolase</keyword>
<keyword id="KW-1185">Reference proteome</keyword>
<comment type="function">
    <text evidence="1">Excises uracil residues from the DNA which can arise as a result of misincorporation of dUMP residues by DNA polymerase or due to deamination of cytosine.</text>
</comment>
<comment type="catalytic activity">
    <reaction evidence="1">
        <text>Hydrolyzes single-stranded DNA or mismatched double-stranded DNA and polynucleotides, releasing free uracil.</text>
        <dbReference type="EC" id="3.2.2.27"/>
    </reaction>
</comment>
<comment type="subcellular location">
    <subcellularLocation>
        <location evidence="1">Cytoplasm</location>
    </subcellularLocation>
</comment>
<comment type="similarity">
    <text evidence="1">Belongs to the uracil-DNA glycosylase (UDG) superfamily. UNG family.</text>
</comment>
<proteinExistence type="inferred from homology"/>
<gene>
    <name evidence="1" type="primary">ung</name>
    <name type="ordered locus">LCA_1344</name>
</gene>
<dbReference type="EC" id="3.2.2.27" evidence="1"/>
<dbReference type="EMBL" id="CR936503">
    <property type="protein sequence ID" value="CAI55648.1"/>
    <property type="molecule type" value="Genomic_DNA"/>
</dbReference>
<dbReference type="RefSeq" id="WP_011375039.1">
    <property type="nucleotide sequence ID" value="NC_007576.1"/>
</dbReference>
<dbReference type="SMR" id="Q38VY5"/>
<dbReference type="STRING" id="314315.LCA_1344"/>
<dbReference type="KEGG" id="lsa:LCA_1344"/>
<dbReference type="eggNOG" id="COG0692">
    <property type="taxonomic scope" value="Bacteria"/>
</dbReference>
<dbReference type="HOGENOM" id="CLU_032162_3_0_9"/>
<dbReference type="OrthoDB" id="9804372at2"/>
<dbReference type="Proteomes" id="UP000002707">
    <property type="component" value="Chromosome"/>
</dbReference>
<dbReference type="GO" id="GO:0005737">
    <property type="term" value="C:cytoplasm"/>
    <property type="evidence" value="ECO:0007669"/>
    <property type="project" value="UniProtKB-SubCell"/>
</dbReference>
<dbReference type="GO" id="GO:0004844">
    <property type="term" value="F:uracil DNA N-glycosylase activity"/>
    <property type="evidence" value="ECO:0007669"/>
    <property type="project" value="UniProtKB-UniRule"/>
</dbReference>
<dbReference type="GO" id="GO:0097510">
    <property type="term" value="P:base-excision repair, AP site formation via deaminated base removal"/>
    <property type="evidence" value="ECO:0007669"/>
    <property type="project" value="TreeGrafter"/>
</dbReference>
<dbReference type="CDD" id="cd10027">
    <property type="entry name" value="UDG-F1-like"/>
    <property type="match status" value="1"/>
</dbReference>
<dbReference type="FunFam" id="3.40.470.10:FF:000001">
    <property type="entry name" value="Uracil-DNA glycosylase"/>
    <property type="match status" value="1"/>
</dbReference>
<dbReference type="Gene3D" id="3.40.470.10">
    <property type="entry name" value="Uracil-DNA glycosylase-like domain"/>
    <property type="match status" value="1"/>
</dbReference>
<dbReference type="HAMAP" id="MF_00148">
    <property type="entry name" value="UDG"/>
    <property type="match status" value="1"/>
</dbReference>
<dbReference type="InterPro" id="IPR002043">
    <property type="entry name" value="UDG_fam1"/>
</dbReference>
<dbReference type="InterPro" id="IPR018085">
    <property type="entry name" value="Ura-DNA_Glyclase_AS"/>
</dbReference>
<dbReference type="InterPro" id="IPR005122">
    <property type="entry name" value="Uracil-DNA_glycosylase-like"/>
</dbReference>
<dbReference type="InterPro" id="IPR036895">
    <property type="entry name" value="Uracil-DNA_glycosylase-like_sf"/>
</dbReference>
<dbReference type="NCBIfam" id="NF003588">
    <property type="entry name" value="PRK05254.1-1"/>
    <property type="match status" value="1"/>
</dbReference>
<dbReference type="NCBIfam" id="NF003589">
    <property type="entry name" value="PRK05254.1-2"/>
    <property type="match status" value="1"/>
</dbReference>
<dbReference type="NCBIfam" id="NF003591">
    <property type="entry name" value="PRK05254.1-4"/>
    <property type="match status" value="1"/>
</dbReference>
<dbReference type="NCBIfam" id="NF003592">
    <property type="entry name" value="PRK05254.1-5"/>
    <property type="match status" value="1"/>
</dbReference>
<dbReference type="NCBIfam" id="TIGR00628">
    <property type="entry name" value="ung"/>
    <property type="match status" value="1"/>
</dbReference>
<dbReference type="PANTHER" id="PTHR11264">
    <property type="entry name" value="URACIL-DNA GLYCOSYLASE"/>
    <property type="match status" value="1"/>
</dbReference>
<dbReference type="PANTHER" id="PTHR11264:SF0">
    <property type="entry name" value="URACIL-DNA GLYCOSYLASE"/>
    <property type="match status" value="1"/>
</dbReference>
<dbReference type="Pfam" id="PF03167">
    <property type="entry name" value="UDG"/>
    <property type="match status" value="1"/>
</dbReference>
<dbReference type="SMART" id="SM00986">
    <property type="entry name" value="UDG"/>
    <property type="match status" value="1"/>
</dbReference>
<dbReference type="SMART" id="SM00987">
    <property type="entry name" value="UreE_C"/>
    <property type="match status" value="1"/>
</dbReference>
<dbReference type="SUPFAM" id="SSF52141">
    <property type="entry name" value="Uracil-DNA glycosylase-like"/>
    <property type="match status" value="1"/>
</dbReference>
<dbReference type="PROSITE" id="PS00130">
    <property type="entry name" value="U_DNA_GLYCOSYLASE"/>
    <property type="match status" value="1"/>
</dbReference>
<protein>
    <recommendedName>
        <fullName evidence="1">Uracil-DNA glycosylase</fullName>
        <shortName evidence="1">UDG</shortName>
        <ecNumber evidence="1">3.2.2.27</ecNumber>
    </recommendedName>
</protein>
<feature type="chain" id="PRO_1000009908" description="Uracil-DNA glycosylase">
    <location>
        <begin position="1"/>
        <end position="229"/>
    </location>
</feature>
<feature type="active site" description="Proton acceptor" evidence="1">
    <location>
        <position position="65"/>
    </location>
</feature>
<reference key="1">
    <citation type="journal article" date="2005" name="Nat. Biotechnol.">
        <title>The complete genome sequence of the meat-borne lactic acid bacterium Lactobacillus sakei 23K.</title>
        <authorList>
            <person name="Chaillou S."/>
            <person name="Champomier-Verges M.-C."/>
            <person name="Cornet M."/>
            <person name="Crutz-Le Coq A.-M."/>
            <person name="Dudez A.-M."/>
            <person name="Martin V."/>
            <person name="Beaufils S."/>
            <person name="Darbon-Rongere E."/>
            <person name="Bossy R."/>
            <person name="Loux V."/>
            <person name="Zagorec M."/>
        </authorList>
    </citation>
    <scope>NUCLEOTIDE SEQUENCE [LARGE SCALE GENOMIC DNA]</scope>
    <source>
        <strain>23K</strain>
    </source>
</reference>